<accession>B8NM62</accession>
<proteinExistence type="inferred from homology"/>
<sequence length="249" mass="28357">MPIFYESLSDNLRDWALRQPLFFVSSAPYRGRHINVSPKGLPDSSFAVLSPSKVAYVDSTGSGCETICHLRENGRATVMFCSFDATPRIMRLFCTGSVIEWNDPRYAGYVKRMGVKSLVGARAVIILDIFKVQISCGFGVPLLDLTVDPETNEPKPCFTNRPRLGKFAEYTINRGELPEYQMQWNSRSLDGLPGLHSAMRDKGEFIWWAHVTNWASYYHFQLDIIKTGMALMFLVMVVAQWVGYVLYQW</sequence>
<reference key="1">
    <citation type="journal article" date="2015" name="Genome Announc.">
        <title>Genome sequence of Aspergillus flavus NRRL 3357, a strain that causes aflatoxin contamination of food and feed.</title>
        <authorList>
            <person name="Nierman W.C."/>
            <person name="Yu J."/>
            <person name="Fedorova-Abrams N.D."/>
            <person name="Losada L."/>
            <person name="Cleveland T.E."/>
            <person name="Bhatnagar D."/>
            <person name="Bennett J.W."/>
            <person name="Dean R."/>
            <person name="Payne G.A."/>
        </authorList>
    </citation>
    <scope>NUCLEOTIDE SEQUENCE [LARGE SCALE GENOMIC DNA]</scope>
    <source>
        <strain>ATCC 200026 / FGSC A1120 / IAM 13836 / NRRL 3357 / JCM 12722 / SRRC 167</strain>
    </source>
</reference>
<reference key="2">
    <citation type="journal article" date="2014" name="Fungal Genet. Biol.">
        <title>Characterization of the biosynthetic gene cluster for the ribosomally synthesized cyclic peptide ustiloxin B in Aspergillus flavus.</title>
        <authorList>
            <person name="Umemura M."/>
            <person name="Nagano N."/>
            <person name="Koike H."/>
            <person name="Kawano J."/>
            <person name="Ishii T."/>
            <person name="Miyamura Y."/>
            <person name="Kikuchi M."/>
            <person name="Tamano K."/>
            <person name="Yu J."/>
            <person name="Shin-ya K."/>
            <person name="Machida M."/>
        </authorList>
    </citation>
    <scope>FUNCTION</scope>
    <scope>DISRUPTION PHENOTYPE</scope>
</reference>
<reference key="3">
    <citation type="journal article" date="2016" name="Angew. Chem. Int. Ed.">
        <title>Unveiling the biosynthetic pathway of the ribosomally synthesized and post-translationally modified peptide ustiloxin B in filamentous fungi.</title>
        <authorList>
            <person name="Ye Y."/>
            <person name="Minami A."/>
            <person name="Igarashi Y."/>
            <person name="Izumikawa M."/>
            <person name="Umemura M."/>
            <person name="Nagano N."/>
            <person name="Machida M."/>
            <person name="Kawahara T."/>
            <person name="Shin-Ya K."/>
            <person name="Gomi K."/>
            <person name="Oikawa H."/>
        </authorList>
    </citation>
    <scope>FUNCTION</scope>
</reference>
<reference key="4">
    <citation type="journal article" date="2016" name="Fungal Genet. Biol.">
        <title>Class of cyclic ribosomal peptide synthetic genes in filamentous fungi.</title>
        <authorList>
            <person name="Nagano N."/>
            <person name="Umemura M."/>
            <person name="Izumikawa M."/>
            <person name="Kawano J."/>
            <person name="Ishii T."/>
            <person name="Kikuchi M."/>
            <person name="Tomii K."/>
            <person name="Kumagai T."/>
            <person name="Yoshimi A."/>
            <person name="Machida M."/>
            <person name="Abe K."/>
            <person name="Shin-ya K."/>
            <person name="Asai K."/>
        </authorList>
    </citation>
    <scope>FUNCTION</scope>
    <scope>DISRUPTION PHENOTYPE</scope>
</reference>
<dbReference type="EC" id="1.-.-.-" evidence="7"/>
<dbReference type="EMBL" id="EQ963480">
    <property type="protein sequence ID" value="EED49413.1"/>
    <property type="molecule type" value="Genomic_DNA"/>
</dbReference>
<dbReference type="RefSeq" id="XP_002381314.1">
    <property type="nucleotide sequence ID" value="XM_002381273.1"/>
</dbReference>
<dbReference type="SMR" id="B8NM62"/>
<dbReference type="STRING" id="332952.B8NM62"/>
<dbReference type="EnsemblFungi" id="EED49413">
    <property type="protein sequence ID" value="EED49413"/>
    <property type="gene ID" value="AFLA_094940"/>
</dbReference>
<dbReference type="VEuPathDB" id="FungiDB:AFLA_009731"/>
<dbReference type="eggNOG" id="ENOG502S3ZI">
    <property type="taxonomic scope" value="Eukaryota"/>
</dbReference>
<dbReference type="HOGENOM" id="CLU_054794_1_0_1"/>
<dbReference type="OMA" id="SGCETIC"/>
<dbReference type="GO" id="GO:0016020">
    <property type="term" value="C:membrane"/>
    <property type="evidence" value="ECO:0007669"/>
    <property type="project" value="UniProtKB-SubCell"/>
</dbReference>
<dbReference type="GO" id="GO:0016491">
    <property type="term" value="F:oxidoreductase activity"/>
    <property type="evidence" value="ECO:0007669"/>
    <property type="project" value="UniProtKB-KW"/>
</dbReference>
<dbReference type="Gene3D" id="2.30.110.10">
    <property type="entry name" value="Electron Transport, Fmn-binding Protein, Chain A"/>
    <property type="match status" value="1"/>
</dbReference>
<dbReference type="InterPro" id="IPR012349">
    <property type="entry name" value="Split_barrel_FMN-bd"/>
</dbReference>
<dbReference type="PANTHER" id="PTHR39336">
    <property type="entry name" value="PYRIDOXAMINE PHOSPHATE OXIDASE FAMILY PROTEIN (AFU_ORTHOLOGUE AFUA_6G11440)"/>
    <property type="match status" value="1"/>
</dbReference>
<dbReference type="PANTHER" id="PTHR39336:SF1">
    <property type="entry name" value="PYRIDOXAMINE PHOSPHATE OXIDASE FAMILY PROTEIN (AFU_ORTHOLOGUE AFUA_6G11440)"/>
    <property type="match status" value="1"/>
</dbReference>
<protein>
    <recommendedName>
        <fullName evidence="6">Pyridoxamine 5'-phosphate oxidase family protein ustO</fullName>
        <ecNumber evidence="7">1.-.-.-</ecNumber>
    </recommendedName>
    <alternativeName>
        <fullName evidence="6">Ustiloxin B biosynthesis protein O</fullName>
    </alternativeName>
</protein>
<organism>
    <name type="scientific">Aspergillus flavus (strain ATCC 200026 / FGSC A1120 / IAM 13836 / NRRL 3357 / JCM 12722 / SRRC 167)</name>
    <dbReference type="NCBI Taxonomy" id="332952"/>
    <lineage>
        <taxon>Eukaryota</taxon>
        <taxon>Fungi</taxon>
        <taxon>Dikarya</taxon>
        <taxon>Ascomycota</taxon>
        <taxon>Pezizomycotina</taxon>
        <taxon>Eurotiomycetes</taxon>
        <taxon>Eurotiomycetidae</taxon>
        <taxon>Eurotiales</taxon>
        <taxon>Aspergillaceae</taxon>
        <taxon>Aspergillus</taxon>
        <taxon>Aspergillus subgen. Circumdati</taxon>
    </lineage>
</organism>
<evidence type="ECO:0000250" key="1">
    <source>
        <dbReference type="UniProtKB" id="P0AFI7"/>
    </source>
</evidence>
<evidence type="ECO:0000255" key="2"/>
<evidence type="ECO:0000269" key="3">
    <source>
    </source>
</evidence>
<evidence type="ECO:0000269" key="4">
    <source>
    </source>
</evidence>
<evidence type="ECO:0000269" key="5">
    <source>
    </source>
</evidence>
<evidence type="ECO:0000303" key="6">
    <source>
    </source>
</evidence>
<evidence type="ECO:0000305" key="7"/>
<keyword id="KW-0285">Flavoprotein</keyword>
<keyword id="KW-0288">FMN</keyword>
<keyword id="KW-0472">Membrane</keyword>
<keyword id="KW-0560">Oxidoreductase</keyword>
<keyword id="KW-0812">Transmembrane</keyword>
<keyword id="KW-1133">Transmembrane helix</keyword>
<feature type="chain" id="PRO_0000437306" description="Pyridoxamine 5'-phosphate oxidase family protein ustO">
    <location>
        <begin position="1"/>
        <end position="249"/>
    </location>
</feature>
<feature type="transmembrane region" description="Helical" evidence="2">
    <location>
        <begin position="227"/>
        <end position="247"/>
    </location>
</feature>
<feature type="binding site" evidence="1">
    <location>
        <begin position="21"/>
        <end position="24"/>
    </location>
    <ligand>
        <name>substrate</name>
    </ligand>
</feature>
<feature type="binding site" evidence="1">
    <location>
        <begin position="76"/>
        <end position="81"/>
    </location>
    <ligand>
        <name>FMN</name>
        <dbReference type="ChEBI" id="CHEBI:58210"/>
    </ligand>
</feature>
<feature type="binding site" evidence="1">
    <location>
        <begin position="91"/>
        <end position="92"/>
    </location>
    <ligand>
        <name>FMN</name>
        <dbReference type="ChEBI" id="CHEBI:58210"/>
    </ligand>
</feature>
<feature type="binding site" evidence="1">
    <location>
        <position position="105"/>
    </location>
    <ligand>
        <name>FMN</name>
        <dbReference type="ChEBI" id="CHEBI:58210"/>
    </ligand>
</feature>
<feature type="binding site" evidence="1">
    <location>
        <begin position="163"/>
        <end position="164"/>
    </location>
    <ligand>
        <name>FMN</name>
        <dbReference type="ChEBI" id="CHEBI:58210"/>
    </ligand>
</feature>
<feature type="binding site" evidence="1">
    <location>
        <begin position="215"/>
        <end position="217"/>
    </location>
    <ligand>
        <name>substrate</name>
    </ligand>
</feature>
<name>USTO_ASPFN</name>
<gene>
    <name evidence="6" type="primary">ustO</name>
    <name type="ORF">AFLA_094940</name>
</gene>
<comment type="function">
    <text evidence="3 4 5">Pyridoxamine 5'-phosphate oxidase family protein; part of the gene cluster that mediates the biosynthesis of the secondary metabolite ustiloxin B, an antimitotic tetrapeptide (PubMed:24841822, PubMed:26703898, PubMed:27166860). First, ustA is processed by the subtilisin-like endoprotease Kex2 that is outside the ustiloxin B gene cluster, at the C-terminal side of Arg-Lys, after transfer to Golgi apparatus through the endoplasmic reticulum (ER) (PubMed:24841822). Cleavage by KEX2 generates 16 peptides YAIG-I to YAIG-XVI (PubMed:24841822). To process the precursor peptide further, at least two peptidases are necessary to cleave the N-terminal and C-terminal sides of the Tyr-Ala-Ile-Gly core peptide which serves as backbone for the synthesis of ustiloxin B, through cyclization and modification of the tyrosine with a non-protein coding amino acid, norvaline (PubMed:24841822). One of the two peptidases must be the serine peptidase ustP; and the other pepdidase is probably ustH (PubMed:24841822). Macrocyclization of the core peptide derived from ustA requires the tyrosinase ustQ, as well as the homologous oxidases ustYa and ustYb, and leads to the production of the first cyclization product N-desmethylustiloxin F (PubMed:26703898, PubMed:27166860). For the formation of N-desmethylustiloxin F, three oxidation steps are required, hydroxylation at the benzylic position, hydroxylation at either the aromatic ring of Tyr or beta-position of Ile, and oxidative cyclization (PubMed:27166860). UstQ may catalyze the oxidation of a phenol moiety, whereas the ustYa and ustYb are most likely responsible for the remaining two-step oxidations (PubMed:27166860). N-desmethylustiloxin F is then methylated by ustM to yield ustiloxin F which in turn substrate of the cytochrome P450 monooxygenase ustC which catalyzes the formation of S-deoxyustiloxin H (PubMed:27166860). The flavoprotein monooxygenases ustF1 and ustF2 then participate in the modification of the side chain of S-deoxyustiloxin H, leading to the synthesis of an oxime intermediate, via ustiloxin H (PubMed:27166860). Finally, carboxylative dehydration performed by the cysteine desulfurase-like protein ustD yields ustiloxin B (PubMed:27166860).</text>
</comment>
<comment type="cofactor">
    <cofactor evidence="1">
        <name>FMN</name>
        <dbReference type="ChEBI" id="CHEBI:58210"/>
    </cofactor>
    <text evidence="1">Binds 1 FMN per subunit.</text>
</comment>
<comment type="pathway">
    <text evidence="3">Mycotoxin biosynthesis.</text>
</comment>
<comment type="subcellular location">
    <subcellularLocation>
        <location evidence="2">Membrane</location>
        <topology evidence="2">Single-pass membrane protein</topology>
    </subcellularLocation>
</comment>
<comment type="disruption phenotype">
    <text evidence="3 4">Decreases the production of ustiloxin B (PubMed:24841822, PubMed:26703898).</text>
</comment>
<comment type="similarity">
    <text evidence="7">Belongs to the pyridoxamine 5'-phosphate oxidase family.</text>
</comment>